<evidence type="ECO:0000255" key="1">
    <source>
        <dbReference type="PROSITE-ProRule" id="PRU00159"/>
    </source>
</evidence>
<evidence type="ECO:0000255" key="2">
    <source>
        <dbReference type="PROSITE-ProRule" id="PRU10027"/>
    </source>
</evidence>
<evidence type="ECO:0000256" key="3">
    <source>
        <dbReference type="SAM" id="MobiDB-lite"/>
    </source>
</evidence>
<evidence type="ECO:0000269" key="4">
    <source>
    </source>
</evidence>
<evidence type="ECO:0000269" key="5">
    <source>
    </source>
</evidence>
<evidence type="ECO:0000269" key="6">
    <source>
    </source>
</evidence>
<evidence type="ECO:0000269" key="7">
    <source>
    </source>
</evidence>
<evidence type="ECO:0000305" key="8"/>
<evidence type="ECO:0007829" key="9">
    <source>
        <dbReference type="PDB" id="6LPH"/>
    </source>
</evidence>
<sequence length="805" mass="90347">MNRYAVSSLVGQGSFGCVYKATRKDDSKVVAIKVISKRGRATKELKNLRRECDIQARLKHPHVIEMIESFESKTDLFVVTEFALMDLHRYLSYNGAMGEEPARRVTGHLVSALYYLHSNRILHRDLKPQNVLLDKNMHAKLCDFGLARNMTLGTHVLTSIKGTPLYMAPELLAEQPYDHHADMWSLGCIAYESMAGQPPFCASSILHLVKMIKHEDVKWPSTLTSECRSFLQGLLEKDPGLRISWTQLLCHPFVEGRIFIAETQAEAAKESPFTNPEAKVKSSKQSDPEVGDLDEALAALDFGESRQENLTTSRDSINAIAPSDVEHLETDVEDNMQRVVVPFADLSYRDLSGVRAMPMVHQPVINSHTCFVSGNSNMILNHMNDNFDFQASLRGGGVAAKPIVAPTVRQSRSKDLEKRKLSQNLDNFSVRLGHSVDHEAQRKATEIATQEKHNQENKPPAEAISYANSQPPQQQPQQLKHSMHSTNEEKLSSDNTPPCLLPGWDSCDESQSPPIENDEWLAFLNRSVQELLDGELDSLKQHNLVSIIVAPLRNSKAIPRVLKSVAQLLSLPFVLVDPVLIVDLELIRNVYVDVKLVPNLMYACKLLLSHKQLSDSAASAPLTTGSLSRTLRSIPELTVEELETACSLYELVCHLVHLQQQFLTQFCDAVAILAASDLFLNFLTHDFRQSDSDAASVRLAGCMLALMGCVLRELPENAELVERIVFNPRLNFVSLLQSRHHLLRQRSCQLLRLLARFSLRGVQRIWNGELRFALQQLSEHHSYPALRGEAAQTLDEISHFTFFVT</sequence>
<proteinExistence type="evidence at protein level"/>
<accession>P23647</accession>
<accession>Q26346</accession>
<accession>Q26347</accession>
<accession>Q27412</accession>
<accession>Q9VWR7</accession>
<protein>
    <recommendedName>
        <fullName>Serine/threonine-protein kinase fused</fullName>
        <ecNumber>2.7.11.1</ecNumber>
    </recommendedName>
</protein>
<feature type="chain" id="PRO_0000085954" description="Serine/threonine-protein kinase fused">
    <location>
        <begin position="1"/>
        <end position="805"/>
    </location>
</feature>
<feature type="domain" description="Protein kinase" evidence="1">
    <location>
        <begin position="4"/>
        <end position="254"/>
    </location>
</feature>
<feature type="region of interest" description="Disordered" evidence="3">
    <location>
        <begin position="269"/>
        <end position="289"/>
    </location>
</feature>
<feature type="region of interest" description="Disordered" evidence="3">
    <location>
        <begin position="447"/>
        <end position="496"/>
    </location>
</feature>
<feature type="compositionally biased region" description="Basic and acidic residues" evidence="3">
    <location>
        <begin position="278"/>
        <end position="287"/>
    </location>
</feature>
<feature type="compositionally biased region" description="Basic and acidic residues" evidence="3">
    <location>
        <begin position="447"/>
        <end position="456"/>
    </location>
</feature>
<feature type="active site" description="Proton acceptor" evidence="1 2">
    <location>
        <position position="125"/>
    </location>
</feature>
<feature type="binding site" evidence="1">
    <location>
        <begin position="10"/>
        <end position="18"/>
    </location>
    <ligand>
        <name>ATP</name>
        <dbReference type="ChEBI" id="CHEBI:30616"/>
    </ligand>
</feature>
<feature type="binding site" evidence="1">
    <location>
        <position position="33"/>
    </location>
    <ligand>
        <name>ATP</name>
        <dbReference type="ChEBI" id="CHEBI:30616"/>
    </ligand>
</feature>
<feature type="modified residue" description="Phosphoserine" evidence="4">
    <location>
        <position position="422"/>
    </location>
</feature>
<feature type="modified residue" description="Phosphoserine" evidence="4">
    <location>
        <position position="429"/>
    </location>
</feature>
<feature type="mutagenesis site" description="In FU-62." evidence="7">
    <location>
        <begin position="139"/>
        <end position="141"/>
    </location>
</feature>
<feature type="mutagenesis site" description="In FU-H63." evidence="7">
    <original>A</original>
    <variation>T</variation>
    <location>
        <position position="147"/>
    </location>
</feature>
<feature type="sequence conflict" description="In Ref. 2; AAF48871." evidence="8" ref="2">
    <original>L</original>
    <variation>M</variation>
    <location>
        <position position="9"/>
    </location>
</feature>
<feature type="sequence conflict" description="In Ref. 1; CAA56640/AAA28552." evidence="8" ref="1">
    <original>F</original>
    <variation>L</variation>
    <location>
        <position position="15"/>
    </location>
</feature>
<feature type="sequence conflict" description="In Ref. 5." evidence="8" ref="5">
    <original>K</original>
    <variation>KVSGAGQVIKQQVHTTSSHHIHVLQ</variation>
    <location>
        <position position="37"/>
    </location>
</feature>
<feature type="sequence conflict" description="In Ref. 1 and 5." evidence="8" ref="1 5">
    <original>EQ</original>
    <variation>DE</variation>
    <location>
        <begin position="174"/>
        <end position="175"/>
    </location>
</feature>
<feature type="sequence conflict" description="In Ref. 1 and 5." evidence="8" ref="1 5">
    <original>S</original>
    <variation>C</variation>
    <location>
        <position position="225"/>
    </location>
</feature>
<feature type="sequence conflict" description="In Ref. 1; CAA56640/AAA28552." evidence="8" ref="1">
    <original>E</original>
    <variation>D</variation>
    <location>
        <position position="326"/>
    </location>
</feature>
<feature type="sequence conflict" description="In Ref. 1; CAA56640/AAA28552." evidence="8" ref="1">
    <original>G</original>
    <variation>V</variation>
    <location>
        <position position="397"/>
    </location>
</feature>
<feature type="sequence conflict" description="In Ref. 1; CAA56640/AAA28552." evidence="8" ref="1">
    <original>G</original>
    <variation>S</variation>
    <location>
        <position position="708"/>
    </location>
</feature>
<feature type="sequence conflict" description="In Ref. 1; CAA56640/AAA28552." evidence="8" ref="1">
    <original>R</original>
    <variation>G</variation>
    <location>
        <position position="744"/>
    </location>
</feature>
<feature type="strand" evidence="9">
    <location>
        <begin position="378"/>
        <end position="382"/>
    </location>
</feature>
<feature type="helix" evidence="9">
    <location>
        <begin position="383"/>
        <end position="386"/>
    </location>
</feature>
<name>FUSED_DROME</name>
<gene>
    <name type="primary">fu</name>
    <name type="ORF">CG6551</name>
</gene>
<comment type="function">
    <text evidence="5">Probable serine/threonine-protein kinase; maternally required for correct patterning in the posterior part of each embryonic metamere. May be involved in control of cell division during metamorphosis and ovarian development. May interact with costal-2.</text>
</comment>
<comment type="catalytic activity">
    <reaction>
        <text>L-seryl-[protein] + ATP = O-phospho-L-seryl-[protein] + ADP + H(+)</text>
        <dbReference type="Rhea" id="RHEA:17989"/>
        <dbReference type="Rhea" id="RHEA-COMP:9863"/>
        <dbReference type="Rhea" id="RHEA-COMP:11604"/>
        <dbReference type="ChEBI" id="CHEBI:15378"/>
        <dbReference type="ChEBI" id="CHEBI:29999"/>
        <dbReference type="ChEBI" id="CHEBI:30616"/>
        <dbReference type="ChEBI" id="CHEBI:83421"/>
        <dbReference type="ChEBI" id="CHEBI:456216"/>
        <dbReference type="EC" id="2.7.11.1"/>
    </reaction>
</comment>
<comment type="catalytic activity">
    <reaction>
        <text>L-threonyl-[protein] + ATP = O-phospho-L-threonyl-[protein] + ADP + H(+)</text>
        <dbReference type="Rhea" id="RHEA:46608"/>
        <dbReference type="Rhea" id="RHEA-COMP:11060"/>
        <dbReference type="Rhea" id="RHEA-COMP:11605"/>
        <dbReference type="ChEBI" id="CHEBI:15378"/>
        <dbReference type="ChEBI" id="CHEBI:30013"/>
        <dbReference type="ChEBI" id="CHEBI:30616"/>
        <dbReference type="ChEBI" id="CHEBI:61977"/>
        <dbReference type="ChEBI" id="CHEBI:456216"/>
        <dbReference type="EC" id="2.7.11.1"/>
    </reaction>
</comment>
<comment type="interaction">
    <interactant intactId="EBI-165536">
        <id>P23647</id>
    </interactant>
    <interactant intactId="EBI-94976">
        <id>P19538</id>
        <label>ci</label>
    </interactant>
    <organismsDiffer>false</organismsDiffer>
    <experiments>8</experiments>
</comment>
<comment type="interaction">
    <interactant intactId="EBI-165536">
        <id>P23647</id>
    </interactant>
    <interactant intactId="EBI-102069">
        <id>O16844</id>
        <label>cos</label>
    </interactant>
    <organismsDiffer>false</organismsDiffer>
    <experiments>7</experiments>
</comment>
<comment type="interaction">
    <interactant intactId="EBI-165536">
        <id>P23647</id>
    </interactant>
    <interactant intactId="EBI-133520">
        <id>Q9V853</id>
        <label>Smurf</label>
    </interactant>
    <organismsDiffer>false</organismsDiffer>
    <experiments>5</experiments>
</comment>
<comment type="interaction">
    <interactant intactId="EBI-165536">
        <id>P23647</id>
    </interactant>
    <interactant intactId="EBI-3401975">
        <id>Q95SI0</id>
        <label>tkv</label>
    </interactant>
    <organismsDiffer>false</organismsDiffer>
    <experiments>4</experiments>
</comment>
<comment type="tissue specificity">
    <text evidence="6">Expressed in all imaginal disks, higher level in wing disk.</text>
</comment>
<comment type="developmental stage">
    <text>Expressed both maternally and zygotically, low expression is present in males, larvae and pupae.</text>
</comment>
<comment type="similarity">
    <text evidence="1">Belongs to the protein kinase superfamily. Ser/Thr protein kinase family.</text>
</comment>
<keyword id="KW-0002">3D-structure</keyword>
<keyword id="KW-0067">ATP-binding</keyword>
<keyword id="KW-0217">Developmental protein</keyword>
<keyword id="KW-0418">Kinase</keyword>
<keyword id="KW-0547">Nucleotide-binding</keyword>
<keyword id="KW-0597">Phosphoprotein</keyword>
<keyword id="KW-1185">Reference proteome</keyword>
<keyword id="KW-0709">Segmentation polarity protein</keyword>
<keyword id="KW-0723">Serine/threonine-protein kinase</keyword>
<keyword id="KW-0808">Transferase</keyword>
<organism>
    <name type="scientific">Drosophila melanogaster</name>
    <name type="common">Fruit fly</name>
    <dbReference type="NCBI Taxonomy" id="7227"/>
    <lineage>
        <taxon>Eukaryota</taxon>
        <taxon>Metazoa</taxon>
        <taxon>Ecdysozoa</taxon>
        <taxon>Arthropoda</taxon>
        <taxon>Hexapoda</taxon>
        <taxon>Insecta</taxon>
        <taxon>Pterygota</taxon>
        <taxon>Neoptera</taxon>
        <taxon>Endopterygota</taxon>
        <taxon>Diptera</taxon>
        <taxon>Brachycera</taxon>
        <taxon>Muscomorpha</taxon>
        <taxon>Ephydroidea</taxon>
        <taxon>Drosophilidae</taxon>
        <taxon>Drosophila</taxon>
        <taxon>Sophophora</taxon>
    </lineage>
</organism>
<dbReference type="EC" id="2.7.11.1"/>
<dbReference type="EMBL" id="X80468">
    <property type="protein sequence ID" value="CAA56640.1"/>
    <property type="molecule type" value="Genomic_DNA"/>
</dbReference>
<dbReference type="EMBL" id="L34782">
    <property type="protein sequence ID" value="AAA28552.1"/>
    <property type="molecule type" value="Genomic_DNA"/>
</dbReference>
<dbReference type="EMBL" id="AE014298">
    <property type="protein sequence ID" value="AAF48871.1"/>
    <property type="molecule type" value="Genomic_DNA"/>
</dbReference>
<dbReference type="EMBL" id="S69165">
    <property type="protein sequence ID" value="AAB29840.1"/>
    <property type="molecule type" value="Genomic_DNA"/>
</dbReference>
<dbReference type="EMBL" id="S69166">
    <property type="protein sequence ID" value="AAB29841.1"/>
    <property type="molecule type" value="Genomic_DNA"/>
</dbReference>
<dbReference type="EMBL" id="X55759">
    <property type="protein sequence ID" value="CAA39285.1"/>
    <property type="molecule type" value="Genomic_DNA"/>
</dbReference>
<dbReference type="PIR" id="S11380">
    <property type="entry name" value="S11380"/>
</dbReference>
<dbReference type="RefSeq" id="NP_477499.1">
    <property type="nucleotide sequence ID" value="NM_058151.5"/>
</dbReference>
<dbReference type="PDB" id="6LPH">
    <property type="method" value="X-ray"/>
    <property type="resolution" value="1.91 A"/>
    <property type="chains" value="B=363-387"/>
</dbReference>
<dbReference type="PDBsum" id="6LPH"/>
<dbReference type="SMR" id="P23647"/>
<dbReference type="BioGRID" id="59167">
    <property type="interactions" value="51"/>
</dbReference>
<dbReference type="ComplexPortal" id="CPX-1897">
    <property type="entry name" value="Fused-Smurf ubiquitin ligase complex"/>
</dbReference>
<dbReference type="ComplexPortal" id="CPX-2700">
    <property type="entry name" value="Hedgehog signalling complex"/>
</dbReference>
<dbReference type="DIP" id="DIP-492N"/>
<dbReference type="FunCoup" id="P23647">
    <property type="interactions" value="51"/>
</dbReference>
<dbReference type="IntAct" id="P23647">
    <property type="interactions" value="14"/>
</dbReference>
<dbReference type="STRING" id="7227.FBpp0074373"/>
<dbReference type="iPTMnet" id="P23647"/>
<dbReference type="PaxDb" id="7227-FBpp0074373"/>
<dbReference type="EnsemblMetazoa" id="FBtr0074602">
    <property type="protein sequence ID" value="FBpp0074373"/>
    <property type="gene ID" value="FBgn0001079"/>
</dbReference>
<dbReference type="GeneID" id="32855"/>
<dbReference type="KEGG" id="dme:Dmel_CG6551"/>
<dbReference type="AGR" id="FB:FBgn0001079"/>
<dbReference type="CTD" id="32855"/>
<dbReference type="FlyBase" id="FBgn0001079">
    <property type="gene designation" value="fu"/>
</dbReference>
<dbReference type="VEuPathDB" id="VectorBase:FBgn0001079"/>
<dbReference type="eggNOG" id="KOG0597">
    <property type="taxonomic scope" value="Eukaryota"/>
</dbReference>
<dbReference type="HOGENOM" id="CLU_021728_0_0_1"/>
<dbReference type="InParanoid" id="P23647"/>
<dbReference type="OrthoDB" id="266718at2759"/>
<dbReference type="PhylomeDB" id="P23647"/>
<dbReference type="BRENDA" id="2.7.11.1">
    <property type="organism ID" value="1994"/>
</dbReference>
<dbReference type="Reactome" id="R-DME-209159">
    <property type="pathway name" value="Assembly of the CI containing complexes"/>
</dbReference>
<dbReference type="Reactome" id="R-DME-209190">
    <property type="pathway name" value="Phosphorylation of CI"/>
</dbReference>
<dbReference type="Reactome" id="R-DME-209214">
    <property type="pathway name" value="Phosphorylation of SMO"/>
</dbReference>
<dbReference type="Reactome" id="R-DME-209338">
    <property type="pathway name" value="Assembly of the 'signalling complexes'"/>
</dbReference>
<dbReference type="Reactome" id="R-DME-209360">
    <property type="pathway name" value="Ubiquitination and proteolysis of phosphorylated CI"/>
</dbReference>
<dbReference type="Reactome" id="R-DME-216119">
    <property type="pathway name" value="Activation of CI"/>
</dbReference>
<dbReference type="Reactome" id="R-DME-216217">
    <property type="pathway name" value="Activation of SMO"/>
</dbReference>
<dbReference type="SignaLink" id="P23647"/>
<dbReference type="BioGRID-ORCS" id="32855">
    <property type="hits" value="0 hits in 3 CRISPR screens"/>
</dbReference>
<dbReference type="GenomeRNAi" id="32855"/>
<dbReference type="PRO" id="PR:P23647"/>
<dbReference type="Proteomes" id="UP000000803">
    <property type="component" value="Chromosome X"/>
</dbReference>
<dbReference type="Bgee" id="FBgn0001079">
    <property type="expression patterns" value="Expressed in cleaving embryo and 26 other cell types or tissues"/>
</dbReference>
<dbReference type="ExpressionAtlas" id="P23647">
    <property type="expression patterns" value="baseline and differential"/>
</dbReference>
<dbReference type="GO" id="GO:0005929">
    <property type="term" value="C:cilium"/>
    <property type="evidence" value="ECO:0007669"/>
    <property type="project" value="GOC"/>
</dbReference>
<dbReference type="GO" id="GO:0005737">
    <property type="term" value="C:cytoplasm"/>
    <property type="evidence" value="ECO:0000318"/>
    <property type="project" value="GO_Central"/>
</dbReference>
<dbReference type="GO" id="GO:0005829">
    <property type="term" value="C:cytosol"/>
    <property type="evidence" value="ECO:0000314"/>
    <property type="project" value="FlyBase"/>
</dbReference>
<dbReference type="GO" id="GO:0035301">
    <property type="term" value="C:Hedgehog signaling complex"/>
    <property type="evidence" value="ECO:0000353"/>
    <property type="project" value="FlyBase"/>
</dbReference>
<dbReference type="GO" id="GO:0032991">
    <property type="term" value="C:protein-containing complex"/>
    <property type="evidence" value="ECO:0000353"/>
    <property type="project" value="FlyBase"/>
</dbReference>
<dbReference type="GO" id="GO:0005524">
    <property type="term" value="F:ATP binding"/>
    <property type="evidence" value="ECO:0007669"/>
    <property type="project" value="UniProtKB-KW"/>
</dbReference>
<dbReference type="GO" id="GO:0042803">
    <property type="term" value="F:protein homodimerization activity"/>
    <property type="evidence" value="ECO:0000314"/>
    <property type="project" value="FlyBase"/>
</dbReference>
<dbReference type="GO" id="GO:0106310">
    <property type="term" value="F:protein serine kinase activity"/>
    <property type="evidence" value="ECO:0007669"/>
    <property type="project" value="RHEA"/>
</dbReference>
<dbReference type="GO" id="GO:0004674">
    <property type="term" value="F:protein serine/threonine kinase activity"/>
    <property type="evidence" value="ECO:0000314"/>
    <property type="project" value="FlyBase"/>
</dbReference>
<dbReference type="GO" id="GO:0005119">
    <property type="term" value="F:smoothened binding"/>
    <property type="evidence" value="ECO:0000314"/>
    <property type="project" value="FlyBase"/>
</dbReference>
<dbReference type="GO" id="GO:0007293">
    <property type="term" value="P:germarium-derived egg chamber formation"/>
    <property type="evidence" value="ECO:0000315"/>
    <property type="project" value="FlyBase"/>
</dbReference>
<dbReference type="GO" id="GO:0042073">
    <property type="term" value="P:intraciliary transport"/>
    <property type="evidence" value="ECO:0000315"/>
    <property type="project" value="FlyBase"/>
</dbReference>
<dbReference type="GO" id="GO:0030514">
    <property type="term" value="P:negative regulation of BMP signaling pathway"/>
    <property type="evidence" value="ECO:0000316"/>
    <property type="project" value="FlyBase"/>
</dbReference>
<dbReference type="GO" id="GO:0045879">
    <property type="term" value="P:negative regulation of smoothened signaling pathway"/>
    <property type="evidence" value="ECO:0000315"/>
    <property type="project" value="FlyBase"/>
</dbReference>
<dbReference type="GO" id="GO:0046824">
    <property type="term" value="P:positive regulation of nucleocytoplasmic transport"/>
    <property type="evidence" value="ECO:0000315"/>
    <property type="project" value="FlyBase"/>
</dbReference>
<dbReference type="GO" id="GO:0031398">
    <property type="term" value="P:positive regulation of protein ubiquitination"/>
    <property type="evidence" value="ECO:0000315"/>
    <property type="project" value="FlyBase"/>
</dbReference>
<dbReference type="GO" id="GO:0007367">
    <property type="term" value="P:segment polarity determination"/>
    <property type="evidence" value="ECO:0000315"/>
    <property type="project" value="FlyBase"/>
</dbReference>
<dbReference type="GO" id="GO:0007224">
    <property type="term" value="P:smoothened signaling pathway"/>
    <property type="evidence" value="ECO:0000314"/>
    <property type="project" value="FlyBase"/>
</dbReference>
<dbReference type="GO" id="GO:0035222">
    <property type="term" value="P:wing disc pattern formation"/>
    <property type="evidence" value="ECO:0000315"/>
    <property type="project" value="FlyBase"/>
</dbReference>
<dbReference type="CDD" id="cd14002">
    <property type="entry name" value="STKc_STK36"/>
    <property type="match status" value="1"/>
</dbReference>
<dbReference type="FunFam" id="3.30.200.20:FF:000042">
    <property type="entry name" value="Aurora kinase A"/>
    <property type="match status" value="1"/>
</dbReference>
<dbReference type="FunFam" id="1.10.510.10:FF:001240">
    <property type="entry name" value="Kinase, ULK"/>
    <property type="match status" value="1"/>
</dbReference>
<dbReference type="Gene3D" id="1.10.510.10">
    <property type="entry name" value="Transferase(Phosphotransferase) domain 1"/>
    <property type="match status" value="1"/>
</dbReference>
<dbReference type="InterPro" id="IPR011009">
    <property type="entry name" value="Kinase-like_dom_sf"/>
</dbReference>
<dbReference type="InterPro" id="IPR000719">
    <property type="entry name" value="Prot_kinase_dom"/>
</dbReference>
<dbReference type="InterPro" id="IPR017441">
    <property type="entry name" value="Protein_kinase_ATP_BS"/>
</dbReference>
<dbReference type="InterPro" id="IPR008271">
    <property type="entry name" value="Ser/Thr_kinase_AS"/>
</dbReference>
<dbReference type="PANTHER" id="PTHR22983">
    <property type="entry name" value="PROTEIN KINASE RELATED"/>
    <property type="match status" value="1"/>
</dbReference>
<dbReference type="PANTHER" id="PTHR22983:SF6">
    <property type="entry name" value="SERINE_THREONINE-PROTEIN KINASE 36"/>
    <property type="match status" value="1"/>
</dbReference>
<dbReference type="Pfam" id="PF00069">
    <property type="entry name" value="Pkinase"/>
    <property type="match status" value="1"/>
</dbReference>
<dbReference type="SMART" id="SM00220">
    <property type="entry name" value="S_TKc"/>
    <property type="match status" value="1"/>
</dbReference>
<dbReference type="SUPFAM" id="SSF56112">
    <property type="entry name" value="Protein kinase-like (PK-like)"/>
    <property type="match status" value="1"/>
</dbReference>
<dbReference type="PROSITE" id="PS00107">
    <property type="entry name" value="PROTEIN_KINASE_ATP"/>
    <property type="match status" value="1"/>
</dbReference>
<dbReference type="PROSITE" id="PS50011">
    <property type="entry name" value="PROTEIN_KINASE_DOM"/>
    <property type="match status" value="1"/>
</dbReference>
<dbReference type="PROSITE" id="PS00108">
    <property type="entry name" value="PROTEIN_KINASE_ST"/>
    <property type="match status" value="1"/>
</dbReference>
<reference key="1">
    <citation type="journal article" date="1993" name="Mech. Dev.">
        <title>Molecular organisation and expression pattern of the segment polarity gene fused of Drosophila melanogaster.</title>
        <authorList>
            <person name="Thermond P."/>
            <person name="Busson D."/>
            <person name="Guillemet E."/>
            <person name="Limbourg-Bouchon B."/>
            <person name="Preat T."/>
            <person name="Terracol R."/>
            <person name="Tricoire H."/>
            <person name="Lamour-Isnard C."/>
        </authorList>
    </citation>
    <scope>NUCLEOTIDE SEQUENCE [GENOMIC DNA]</scope>
    <scope>TISSUE SPECIFICITY</scope>
    <source>
        <strain>Oregon-R</strain>
        <tissue>Embryo</tissue>
        <tissue>Ovary</tissue>
        <tissue>Pupae</tissue>
    </source>
</reference>
<reference key="2">
    <citation type="journal article" date="2000" name="Science">
        <title>The genome sequence of Drosophila melanogaster.</title>
        <authorList>
            <person name="Adams M.D."/>
            <person name="Celniker S.E."/>
            <person name="Holt R.A."/>
            <person name="Evans C.A."/>
            <person name="Gocayne J.D."/>
            <person name="Amanatides P.G."/>
            <person name="Scherer S.E."/>
            <person name="Li P.W."/>
            <person name="Hoskins R.A."/>
            <person name="Galle R.F."/>
            <person name="George R.A."/>
            <person name="Lewis S.E."/>
            <person name="Richards S."/>
            <person name="Ashburner M."/>
            <person name="Henderson S.N."/>
            <person name="Sutton G.G."/>
            <person name="Wortman J.R."/>
            <person name="Yandell M.D."/>
            <person name="Zhang Q."/>
            <person name="Chen L.X."/>
            <person name="Brandon R.C."/>
            <person name="Rogers Y.-H.C."/>
            <person name="Blazej R.G."/>
            <person name="Champe M."/>
            <person name="Pfeiffer B.D."/>
            <person name="Wan K.H."/>
            <person name="Doyle C."/>
            <person name="Baxter E.G."/>
            <person name="Helt G."/>
            <person name="Nelson C.R."/>
            <person name="Miklos G.L.G."/>
            <person name="Abril J.F."/>
            <person name="Agbayani A."/>
            <person name="An H.-J."/>
            <person name="Andrews-Pfannkoch C."/>
            <person name="Baldwin D."/>
            <person name="Ballew R.M."/>
            <person name="Basu A."/>
            <person name="Baxendale J."/>
            <person name="Bayraktaroglu L."/>
            <person name="Beasley E.M."/>
            <person name="Beeson K.Y."/>
            <person name="Benos P.V."/>
            <person name="Berman B.P."/>
            <person name="Bhandari D."/>
            <person name="Bolshakov S."/>
            <person name="Borkova D."/>
            <person name="Botchan M.R."/>
            <person name="Bouck J."/>
            <person name="Brokstein P."/>
            <person name="Brottier P."/>
            <person name="Burtis K.C."/>
            <person name="Busam D.A."/>
            <person name="Butler H."/>
            <person name="Cadieu E."/>
            <person name="Center A."/>
            <person name="Chandra I."/>
            <person name="Cherry J.M."/>
            <person name="Cawley S."/>
            <person name="Dahlke C."/>
            <person name="Davenport L.B."/>
            <person name="Davies P."/>
            <person name="de Pablos B."/>
            <person name="Delcher A."/>
            <person name="Deng Z."/>
            <person name="Mays A.D."/>
            <person name="Dew I."/>
            <person name="Dietz S.M."/>
            <person name="Dodson K."/>
            <person name="Doup L.E."/>
            <person name="Downes M."/>
            <person name="Dugan-Rocha S."/>
            <person name="Dunkov B.C."/>
            <person name="Dunn P."/>
            <person name="Durbin K.J."/>
            <person name="Evangelista C.C."/>
            <person name="Ferraz C."/>
            <person name="Ferriera S."/>
            <person name="Fleischmann W."/>
            <person name="Fosler C."/>
            <person name="Gabrielian A.E."/>
            <person name="Garg N.S."/>
            <person name="Gelbart W.M."/>
            <person name="Glasser K."/>
            <person name="Glodek A."/>
            <person name="Gong F."/>
            <person name="Gorrell J.H."/>
            <person name="Gu Z."/>
            <person name="Guan P."/>
            <person name="Harris M."/>
            <person name="Harris N.L."/>
            <person name="Harvey D.A."/>
            <person name="Heiman T.J."/>
            <person name="Hernandez J.R."/>
            <person name="Houck J."/>
            <person name="Hostin D."/>
            <person name="Houston K.A."/>
            <person name="Howland T.J."/>
            <person name="Wei M.-H."/>
            <person name="Ibegwam C."/>
            <person name="Jalali M."/>
            <person name="Kalush F."/>
            <person name="Karpen G.H."/>
            <person name="Ke Z."/>
            <person name="Kennison J.A."/>
            <person name="Ketchum K.A."/>
            <person name="Kimmel B.E."/>
            <person name="Kodira C.D."/>
            <person name="Kraft C.L."/>
            <person name="Kravitz S."/>
            <person name="Kulp D."/>
            <person name="Lai Z."/>
            <person name="Lasko P."/>
            <person name="Lei Y."/>
            <person name="Levitsky A.A."/>
            <person name="Li J.H."/>
            <person name="Li Z."/>
            <person name="Liang Y."/>
            <person name="Lin X."/>
            <person name="Liu X."/>
            <person name="Mattei B."/>
            <person name="McIntosh T.C."/>
            <person name="McLeod M.P."/>
            <person name="McPherson D."/>
            <person name="Merkulov G."/>
            <person name="Milshina N.V."/>
            <person name="Mobarry C."/>
            <person name="Morris J."/>
            <person name="Moshrefi A."/>
            <person name="Mount S.M."/>
            <person name="Moy M."/>
            <person name="Murphy B."/>
            <person name="Murphy L."/>
            <person name="Muzny D.M."/>
            <person name="Nelson D.L."/>
            <person name="Nelson D.R."/>
            <person name="Nelson K.A."/>
            <person name="Nixon K."/>
            <person name="Nusskern D.R."/>
            <person name="Pacleb J.M."/>
            <person name="Palazzolo M."/>
            <person name="Pittman G.S."/>
            <person name="Pan S."/>
            <person name="Pollard J."/>
            <person name="Puri V."/>
            <person name="Reese M.G."/>
            <person name="Reinert K."/>
            <person name="Remington K."/>
            <person name="Saunders R.D.C."/>
            <person name="Scheeler F."/>
            <person name="Shen H."/>
            <person name="Shue B.C."/>
            <person name="Siden-Kiamos I."/>
            <person name="Simpson M."/>
            <person name="Skupski M.P."/>
            <person name="Smith T.J."/>
            <person name="Spier E."/>
            <person name="Spradling A.C."/>
            <person name="Stapleton M."/>
            <person name="Strong R."/>
            <person name="Sun E."/>
            <person name="Svirskas R."/>
            <person name="Tector C."/>
            <person name="Turner R."/>
            <person name="Venter E."/>
            <person name="Wang A.H."/>
            <person name="Wang X."/>
            <person name="Wang Z.-Y."/>
            <person name="Wassarman D.A."/>
            <person name="Weinstock G.M."/>
            <person name="Weissenbach J."/>
            <person name="Williams S.M."/>
            <person name="Woodage T."/>
            <person name="Worley K.C."/>
            <person name="Wu D."/>
            <person name="Yang S."/>
            <person name="Yao Q.A."/>
            <person name="Ye J."/>
            <person name="Yeh R.-F."/>
            <person name="Zaveri J.S."/>
            <person name="Zhan M."/>
            <person name="Zhang G."/>
            <person name="Zhao Q."/>
            <person name="Zheng L."/>
            <person name="Zheng X.H."/>
            <person name="Zhong F.N."/>
            <person name="Zhong W."/>
            <person name="Zhou X."/>
            <person name="Zhu S.C."/>
            <person name="Zhu X."/>
            <person name="Smith H.O."/>
            <person name="Gibbs R.A."/>
            <person name="Myers E.W."/>
            <person name="Rubin G.M."/>
            <person name="Venter J.C."/>
        </authorList>
    </citation>
    <scope>NUCLEOTIDE SEQUENCE [LARGE SCALE GENOMIC DNA]</scope>
    <source>
        <strain>Berkeley</strain>
    </source>
</reference>
<reference key="3">
    <citation type="journal article" date="2002" name="Genome Biol.">
        <title>Annotation of the Drosophila melanogaster euchromatic genome: a systematic review.</title>
        <authorList>
            <person name="Misra S."/>
            <person name="Crosby M.A."/>
            <person name="Mungall C.J."/>
            <person name="Matthews B.B."/>
            <person name="Campbell K.S."/>
            <person name="Hradecky P."/>
            <person name="Huang Y."/>
            <person name="Kaminker J.S."/>
            <person name="Millburn G.H."/>
            <person name="Prochnik S.E."/>
            <person name="Smith C.D."/>
            <person name="Tupy J.L."/>
            <person name="Whitfield E.J."/>
            <person name="Bayraktaroglu L."/>
            <person name="Berman B.P."/>
            <person name="Bettencourt B.R."/>
            <person name="Celniker S.E."/>
            <person name="de Grey A.D.N.J."/>
            <person name="Drysdale R.A."/>
            <person name="Harris N.L."/>
            <person name="Richter J."/>
            <person name="Russo S."/>
            <person name="Schroeder A.J."/>
            <person name="Shu S.Q."/>
            <person name="Stapleton M."/>
            <person name="Yamada C."/>
            <person name="Ashburner M."/>
            <person name="Gelbart W.M."/>
            <person name="Rubin G.M."/>
            <person name="Lewis S.E."/>
        </authorList>
    </citation>
    <scope>GENOME REANNOTATION</scope>
    <source>
        <strain>Berkeley</strain>
    </source>
</reference>
<reference key="4">
    <citation type="journal article" date="1993" name="Genetics">
        <title>Segmental polarity in Drosophila melanogaster: genetic dissection of fused in a Suppressor of fused background reveals interaction with costal-2.</title>
        <authorList>
            <person name="Preat T."/>
            <person name="Therond P."/>
            <person name="Limbourg-Bouchon B."/>
            <person name="Pham A."/>
            <person name="Tricoire H."/>
            <person name="Busson D."/>
            <person name="Lamour-Isnard C."/>
        </authorList>
    </citation>
    <scope>NUCLEOTIDE SEQUENCE [GENOMIC DNA] OF 1-155</scope>
    <scope>MUTAGENESIS</scope>
</reference>
<reference key="5">
    <citation type="journal article" date="1990" name="Nature">
        <title>A putative serine/threonine protein kinase encoded by the segment-polarity fused gene of Drosophila.</title>
        <authorList>
            <person name="Preat T."/>
            <person name="Therond P."/>
            <person name="Lamour-Isnard C."/>
            <person name="Limbourg-Bouchon B."/>
            <person name="Tricoire H."/>
            <person name="Erk I."/>
            <person name="Mariol M.-C."/>
            <person name="Busson D."/>
        </authorList>
    </citation>
    <scope>NUCLEOTIDE SEQUENCE [GENOMIC DNA] OF 1-273</scope>
    <scope>FUNCTION</scope>
</reference>
<reference key="6">
    <citation type="journal article" date="2008" name="J. Proteome Res.">
        <title>Phosphoproteome analysis of Drosophila melanogaster embryos.</title>
        <authorList>
            <person name="Zhai B."/>
            <person name="Villen J."/>
            <person name="Beausoleil S.A."/>
            <person name="Mintseris J."/>
            <person name="Gygi S.P."/>
        </authorList>
    </citation>
    <scope>PHOSPHORYLATION [LARGE SCALE ANALYSIS] AT SER-422 AND SER-429</scope>
    <scope>IDENTIFICATION BY MASS SPECTROMETRY</scope>
    <source>
        <tissue>Embryo</tissue>
    </source>
</reference>